<reference key="1">
    <citation type="submission" date="2008-10" db="EMBL/GenBank/DDBJ databases">
        <title>Genome sequence of Bacillus cereus AH820.</title>
        <authorList>
            <person name="Dodson R.J."/>
            <person name="Durkin A.S."/>
            <person name="Rosovitz M.J."/>
            <person name="Rasko D.A."/>
            <person name="Hoffmaster A."/>
            <person name="Ravel J."/>
            <person name="Sutton G."/>
        </authorList>
    </citation>
    <scope>NUCLEOTIDE SEQUENCE [LARGE SCALE GENOMIC DNA]</scope>
    <source>
        <strain>AH820</strain>
    </source>
</reference>
<protein>
    <recommendedName>
        <fullName evidence="1">Biotin synthase</fullName>
        <ecNumber evidence="1">2.8.1.6</ecNumber>
    </recommendedName>
</protein>
<gene>
    <name evidence="1" type="primary">bioB</name>
    <name type="ordered locus">BCAH820_4138</name>
</gene>
<evidence type="ECO:0000255" key="1">
    <source>
        <dbReference type="HAMAP-Rule" id="MF_01694"/>
    </source>
</evidence>
<evidence type="ECO:0000255" key="2">
    <source>
        <dbReference type="PROSITE-ProRule" id="PRU01266"/>
    </source>
</evidence>
<proteinExistence type="inferred from homology"/>
<feature type="chain" id="PRO_0000381218" description="Biotin synthase">
    <location>
        <begin position="1"/>
        <end position="332"/>
    </location>
</feature>
<feature type="domain" description="Radical SAM core" evidence="2">
    <location>
        <begin position="53"/>
        <end position="282"/>
    </location>
</feature>
<feature type="binding site" evidence="1">
    <location>
        <position position="71"/>
    </location>
    <ligand>
        <name>[4Fe-4S] cluster</name>
        <dbReference type="ChEBI" id="CHEBI:49883"/>
        <note>4Fe-4S-S-AdoMet</note>
    </ligand>
</feature>
<feature type="binding site" evidence="1">
    <location>
        <position position="75"/>
    </location>
    <ligand>
        <name>[4Fe-4S] cluster</name>
        <dbReference type="ChEBI" id="CHEBI:49883"/>
        <note>4Fe-4S-S-AdoMet</note>
    </ligand>
</feature>
<feature type="binding site" evidence="1">
    <location>
        <position position="78"/>
    </location>
    <ligand>
        <name>[4Fe-4S] cluster</name>
        <dbReference type="ChEBI" id="CHEBI:49883"/>
        <note>4Fe-4S-S-AdoMet</note>
    </ligand>
</feature>
<feature type="binding site" evidence="1">
    <location>
        <position position="115"/>
    </location>
    <ligand>
        <name>[2Fe-2S] cluster</name>
        <dbReference type="ChEBI" id="CHEBI:190135"/>
    </ligand>
</feature>
<feature type="binding site" evidence="1">
    <location>
        <position position="147"/>
    </location>
    <ligand>
        <name>[2Fe-2S] cluster</name>
        <dbReference type="ChEBI" id="CHEBI:190135"/>
    </ligand>
</feature>
<feature type="binding site" evidence="1">
    <location>
        <position position="207"/>
    </location>
    <ligand>
        <name>[2Fe-2S] cluster</name>
        <dbReference type="ChEBI" id="CHEBI:190135"/>
    </ligand>
</feature>
<feature type="binding site" evidence="1">
    <location>
        <position position="277"/>
    </location>
    <ligand>
        <name>[2Fe-2S] cluster</name>
        <dbReference type="ChEBI" id="CHEBI:190135"/>
    </ligand>
</feature>
<accession>B7JLW9</accession>
<keyword id="KW-0001">2Fe-2S</keyword>
<keyword id="KW-0004">4Fe-4S</keyword>
<keyword id="KW-0093">Biotin biosynthesis</keyword>
<keyword id="KW-0408">Iron</keyword>
<keyword id="KW-0411">Iron-sulfur</keyword>
<keyword id="KW-0479">Metal-binding</keyword>
<keyword id="KW-0949">S-adenosyl-L-methionine</keyword>
<keyword id="KW-0808">Transferase</keyword>
<comment type="function">
    <text evidence="1">Catalyzes the conversion of dethiobiotin (DTB) to biotin by the insertion of a sulfur atom into dethiobiotin via a radical-based mechanism.</text>
</comment>
<comment type="catalytic activity">
    <reaction evidence="1">
        <text>(4R,5S)-dethiobiotin + (sulfur carrier)-SH + 2 reduced [2Fe-2S]-[ferredoxin] + 2 S-adenosyl-L-methionine = (sulfur carrier)-H + biotin + 2 5'-deoxyadenosine + 2 L-methionine + 2 oxidized [2Fe-2S]-[ferredoxin]</text>
        <dbReference type="Rhea" id="RHEA:22060"/>
        <dbReference type="Rhea" id="RHEA-COMP:10000"/>
        <dbReference type="Rhea" id="RHEA-COMP:10001"/>
        <dbReference type="Rhea" id="RHEA-COMP:14737"/>
        <dbReference type="Rhea" id="RHEA-COMP:14739"/>
        <dbReference type="ChEBI" id="CHEBI:17319"/>
        <dbReference type="ChEBI" id="CHEBI:29917"/>
        <dbReference type="ChEBI" id="CHEBI:33737"/>
        <dbReference type="ChEBI" id="CHEBI:33738"/>
        <dbReference type="ChEBI" id="CHEBI:57586"/>
        <dbReference type="ChEBI" id="CHEBI:57844"/>
        <dbReference type="ChEBI" id="CHEBI:59789"/>
        <dbReference type="ChEBI" id="CHEBI:64428"/>
        <dbReference type="ChEBI" id="CHEBI:149473"/>
        <dbReference type="EC" id="2.8.1.6"/>
    </reaction>
</comment>
<comment type="cofactor">
    <cofactor evidence="1">
        <name>[4Fe-4S] cluster</name>
        <dbReference type="ChEBI" id="CHEBI:49883"/>
    </cofactor>
    <text evidence="1">Binds 1 [4Fe-4S] cluster. The cluster is coordinated with 3 cysteines and an exchangeable S-adenosyl-L-methionine.</text>
</comment>
<comment type="cofactor">
    <cofactor evidence="1">
        <name>[2Fe-2S] cluster</name>
        <dbReference type="ChEBI" id="CHEBI:190135"/>
    </cofactor>
    <text evidence="1">Binds 1 [2Fe-2S] cluster. The cluster is coordinated with 3 cysteines and 1 arginine.</text>
</comment>
<comment type="pathway">
    <text evidence="1">Cofactor biosynthesis; biotin biosynthesis; biotin from 7,8-diaminononanoate: step 2/2.</text>
</comment>
<comment type="subunit">
    <text evidence="1">Homodimer.</text>
</comment>
<comment type="similarity">
    <text evidence="1">Belongs to the radical SAM superfamily. Biotin synthase family.</text>
</comment>
<name>BIOB_BACC0</name>
<dbReference type="EC" id="2.8.1.6" evidence="1"/>
<dbReference type="EMBL" id="CP001283">
    <property type="protein sequence ID" value="ACK92404.1"/>
    <property type="molecule type" value="Genomic_DNA"/>
</dbReference>
<dbReference type="RefSeq" id="WP_000815862.1">
    <property type="nucleotide sequence ID" value="NC_011773.1"/>
</dbReference>
<dbReference type="SMR" id="B7JLW9"/>
<dbReference type="GeneID" id="45024003"/>
<dbReference type="KEGG" id="bcu:BCAH820_4138"/>
<dbReference type="HOGENOM" id="CLU_033172_2_1_9"/>
<dbReference type="UniPathway" id="UPA00078">
    <property type="reaction ID" value="UER00162"/>
</dbReference>
<dbReference type="Proteomes" id="UP000001363">
    <property type="component" value="Chromosome"/>
</dbReference>
<dbReference type="GO" id="GO:0051537">
    <property type="term" value="F:2 iron, 2 sulfur cluster binding"/>
    <property type="evidence" value="ECO:0007669"/>
    <property type="project" value="UniProtKB-KW"/>
</dbReference>
<dbReference type="GO" id="GO:0051539">
    <property type="term" value="F:4 iron, 4 sulfur cluster binding"/>
    <property type="evidence" value="ECO:0007669"/>
    <property type="project" value="UniProtKB-KW"/>
</dbReference>
<dbReference type="GO" id="GO:0004076">
    <property type="term" value="F:biotin synthase activity"/>
    <property type="evidence" value="ECO:0007669"/>
    <property type="project" value="UniProtKB-UniRule"/>
</dbReference>
<dbReference type="GO" id="GO:0005506">
    <property type="term" value="F:iron ion binding"/>
    <property type="evidence" value="ECO:0007669"/>
    <property type="project" value="UniProtKB-UniRule"/>
</dbReference>
<dbReference type="GO" id="GO:0009102">
    <property type="term" value="P:biotin biosynthetic process"/>
    <property type="evidence" value="ECO:0007669"/>
    <property type="project" value="UniProtKB-UniRule"/>
</dbReference>
<dbReference type="CDD" id="cd01335">
    <property type="entry name" value="Radical_SAM"/>
    <property type="match status" value="1"/>
</dbReference>
<dbReference type="FunFam" id="3.20.20.70:FF:000026">
    <property type="entry name" value="Biotin synthase"/>
    <property type="match status" value="1"/>
</dbReference>
<dbReference type="Gene3D" id="3.20.20.70">
    <property type="entry name" value="Aldolase class I"/>
    <property type="match status" value="1"/>
</dbReference>
<dbReference type="HAMAP" id="MF_01694">
    <property type="entry name" value="BioB"/>
    <property type="match status" value="1"/>
</dbReference>
<dbReference type="InterPro" id="IPR013785">
    <property type="entry name" value="Aldolase_TIM"/>
</dbReference>
<dbReference type="InterPro" id="IPR010722">
    <property type="entry name" value="BATS_dom"/>
</dbReference>
<dbReference type="InterPro" id="IPR002684">
    <property type="entry name" value="Biotin_synth/BioAB"/>
</dbReference>
<dbReference type="InterPro" id="IPR024177">
    <property type="entry name" value="Biotin_synthase"/>
</dbReference>
<dbReference type="InterPro" id="IPR006638">
    <property type="entry name" value="Elp3/MiaA/NifB-like_rSAM"/>
</dbReference>
<dbReference type="InterPro" id="IPR007197">
    <property type="entry name" value="rSAM"/>
</dbReference>
<dbReference type="NCBIfam" id="TIGR00433">
    <property type="entry name" value="bioB"/>
    <property type="match status" value="1"/>
</dbReference>
<dbReference type="PANTHER" id="PTHR22976">
    <property type="entry name" value="BIOTIN SYNTHASE"/>
    <property type="match status" value="1"/>
</dbReference>
<dbReference type="PANTHER" id="PTHR22976:SF2">
    <property type="entry name" value="BIOTIN SYNTHASE, MITOCHONDRIAL"/>
    <property type="match status" value="1"/>
</dbReference>
<dbReference type="Pfam" id="PF06968">
    <property type="entry name" value="BATS"/>
    <property type="match status" value="1"/>
</dbReference>
<dbReference type="Pfam" id="PF04055">
    <property type="entry name" value="Radical_SAM"/>
    <property type="match status" value="1"/>
</dbReference>
<dbReference type="PIRSF" id="PIRSF001619">
    <property type="entry name" value="Biotin_synth"/>
    <property type="match status" value="1"/>
</dbReference>
<dbReference type="SFLD" id="SFLDG01060">
    <property type="entry name" value="BATS_domain_containing"/>
    <property type="match status" value="1"/>
</dbReference>
<dbReference type="SFLD" id="SFLDG01278">
    <property type="entry name" value="biotin_synthase_like"/>
    <property type="match status" value="1"/>
</dbReference>
<dbReference type="SMART" id="SM00876">
    <property type="entry name" value="BATS"/>
    <property type="match status" value="1"/>
</dbReference>
<dbReference type="SMART" id="SM00729">
    <property type="entry name" value="Elp3"/>
    <property type="match status" value="1"/>
</dbReference>
<dbReference type="SUPFAM" id="SSF102114">
    <property type="entry name" value="Radical SAM enzymes"/>
    <property type="match status" value="1"/>
</dbReference>
<dbReference type="PROSITE" id="PS51918">
    <property type="entry name" value="RADICAL_SAM"/>
    <property type="match status" value="1"/>
</dbReference>
<sequence>MKQVQTKRDWKKLAYDVVEEKMITKEDAIAILEADDTEVLEIMNAAYIIRHHYFGKKVKLNMIINTKSGLCPEDCGYCSQSIISEAPIDKYAWLTQEKIVEGAHEAIRRKAGTYCIVASGRRPTDKEVNHVIGAVKEIRETTDLKICCCLGFLNEDQAGRLAEAGVHRYNHNLNTHANNYESICSTHTYDDRVDTVQKAKQAGISPCSGAIFGMGETIEERAEIAFELQRIDADSIPCNFLVAVKGTPLEGQKELTPVECLKVLAMMRFVNPTKEIRISGGREINLRSVQPIGLFAANSIFVGDYLTTAGQEPTADWGMIEDLGFEIEECAL</sequence>
<organism>
    <name type="scientific">Bacillus cereus (strain AH820)</name>
    <dbReference type="NCBI Taxonomy" id="405535"/>
    <lineage>
        <taxon>Bacteria</taxon>
        <taxon>Bacillati</taxon>
        <taxon>Bacillota</taxon>
        <taxon>Bacilli</taxon>
        <taxon>Bacillales</taxon>
        <taxon>Bacillaceae</taxon>
        <taxon>Bacillus</taxon>
        <taxon>Bacillus cereus group</taxon>
    </lineage>
</organism>